<evidence type="ECO:0000250" key="1"/>
<evidence type="ECO:0000250" key="2">
    <source>
        <dbReference type="UniProtKB" id="P03901"/>
    </source>
</evidence>
<evidence type="ECO:0000255" key="3"/>
<evidence type="ECO:0000305" key="4"/>
<feature type="chain" id="PRO_0000118453" description="NADH-ubiquinone oxidoreductase chain 4L">
    <location>
        <begin position="1"/>
        <end position="96"/>
    </location>
</feature>
<feature type="transmembrane region" description="Helical" evidence="3">
    <location>
        <begin position="1"/>
        <end position="21"/>
    </location>
</feature>
<feature type="transmembrane region" description="Helical" evidence="3">
    <location>
        <begin position="24"/>
        <end position="44"/>
    </location>
</feature>
<feature type="transmembrane region" description="Helical" evidence="3">
    <location>
        <begin position="57"/>
        <end position="77"/>
    </location>
</feature>
<organism>
    <name type="scientific">Myxine glutinosa</name>
    <name type="common">Atlantic hagfish</name>
    <dbReference type="NCBI Taxonomy" id="7769"/>
    <lineage>
        <taxon>Eukaryota</taxon>
        <taxon>Metazoa</taxon>
        <taxon>Chordata</taxon>
        <taxon>Craniata</taxon>
        <taxon>Vertebrata</taxon>
        <taxon>Cyclostomata</taxon>
        <taxon>Myxini</taxon>
        <taxon>Myxiniformes</taxon>
        <taxon>Myxinidae</taxon>
        <taxon>Myxininae</taxon>
        <taxon>Myxine</taxon>
    </lineage>
</organism>
<proteinExistence type="inferred from homology"/>
<keyword id="KW-0249">Electron transport</keyword>
<keyword id="KW-0472">Membrane</keyword>
<keyword id="KW-0496">Mitochondrion</keyword>
<keyword id="KW-0520">NAD</keyword>
<keyword id="KW-0679">Respiratory chain</keyword>
<keyword id="KW-1278">Translocase</keyword>
<keyword id="KW-0812">Transmembrane</keyword>
<keyword id="KW-1133">Transmembrane helix</keyword>
<keyword id="KW-0813">Transport</keyword>
<keyword id="KW-0830">Ubiquinone</keyword>
<protein>
    <recommendedName>
        <fullName>NADH-ubiquinone oxidoreductase chain 4L</fullName>
        <ecNumber>7.1.1.2</ecNumber>
    </recommendedName>
    <alternativeName>
        <fullName>NADH dehydrogenase subunit 4L</fullName>
    </alternativeName>
</protein>
<accession>Q9G2X0</accession>
<accession>O63922</accession>
<comment type="function">
    <text evidence="2">Core subunit of the mitochondrial membrane respiratory chain NADH dehydrogenase (Complex I) which catalyzes electron transfer from NADH through the respiratory chain, using ubiquinone as an electron acceptor. Part of the enzyme membrane arm which is embedded in the lipid bilayer and involved in proton translocation.</text>
</comment>
<comment type="catalytic activity">
    <reaction evidence="2">
        <text>a ubiquinone + NADH + 5 H(+)(in) = a ubiquinol + NAD(+) + 4 H(+)(out)</text>
        <dbReference type="Rhea" id="RHEA:29091"/>
        <dbReference type="Rhea" id="RHEA-COMP:9565"/>
        <dbReference type="Rhea" id="RHEA-COMP:9566"/>
        <dbReference type="ChEBI" id="CHEBI:15378"/>
        <dbReference type="ChEBI" id="CHEBI:16389"/>
        <dbReference type="ChEBI" id="CHEBI:17976"/>
        <dbReference type="ChEBI" id="CHEBI:57540"/>
        <dbReference type="ChEBI" id="CHEBI:57945"/>
        <dbReference type="EC" id="7.1.1.2"/>
    </reaction>
    <physiologicalReaction direction="left-to-right" evidence="2">
        <dbReference type="Rhea" id="RHEA:29092"/>
    </physiologicalReaction>
</comment>
<comment type="subcellular location">
    <subcellularLocation>
        <location evidence="1">Mitochondrion membrane</location>
        <topology evidence="1">Multi-pass membrane protein</topology>
    </subcellularLocation>
</comment>
<comment type="similarity">
    <text evidence="4">Belongs to the complex I subunit 4L family.</text>
</comment>
<comment type="sequence caution" evidence="4">
    <conflict type="erroneous initiation">
        <sequence resource="EMBL-CDS" id="CAA75490"/>
    </conflict>
</comment>
<sequence length="96" mass="10501">MNPTTFIISFMIALSGLAFYQTHLLSLFLCLEGMALSVFCLMAISSSYTLSLSTIPLPLIMLTFSVCEAGLSLVLLVTMTRTHQNDLMSSLTLLKC</sequence>
<geneLocation type="mitochondrion"/>
<gene>
    <name type="primary">MT-ND4L</name>
    <name type="synonym">MTND4L</name>
    <name type="synonym">NADH4L</name>
    <name type="synonym">ND4L</name>
</gene>
<dbReference type="EC" id="7.1.1.2"/>
<dbReference type="EMBL" id="Y15191">
    <property type="protein sequence ID" value="CAA75490.1"/>
    <property type="status" value="ALT_INIT"/>
    <property type="molecule type" value="Genomic_DNA"/>
</dbReference>
<dbReference type="EMBL" id="AJ404477">
    <property type="protein sequence ID" value="CAC20657.1"/>
    <property type="molecule type" value="Genomic_DNA"/>
</dbReference>
<dbReference type="RefSeq" id="NP_073281.1">
    <property type="nucleotide sequence ID" value="NC_002639.1"/>
</dbReference>
<dbReference type="SMR" id="Q9G2X0"/>
<dbReference type="GeneID" id="802342"/>
<dbReference type="CTD" id="4539"/>
<dbReference type="GO" id="GO:0031966">
    <property type="term" value="C:mitochondrial membrane"/>
    <property type="evidence" value="ECO:0007669"/>
    <property type="project" value="UniProtKB-SubCell"/>
</dbReference>
<dbReference type="GO" id="GO:0045271">
    <property type="term" value="C:respiratory chain complex I"/>
    <property type="evidence" value="ECO:0000250"/>
    <property type="project" value="UniProtKB"/>
</dbReference>
<dbReference type="GO" id="GO:0008137">
    <property type="term" value="F:NADH dehydrogenase (ubiquinone) activity"/>
    <property type="evidence" value="ECO:0000250"/>
    <property type="project" value="UniProtKB"/>
</dbReference>
<dbReference type="Gene3D" id="1.10.287.3510">
    <property type="match status" value="1"/>
</dbReference>
<dbReference type="InterPro" id="IPR039428">
    <property type="entry name" value="NUOK/Mnh_C1-like"/>
</dbReference>
<dbReference type="Pfam" id="PF00420">
    <property type="entry name" value="Oxidored_q2"/>
    <property type="match status" value="1"/>
</dbReference>
<name>NU4LM_MYXGL</name>
<reference key="1">
    <citation type="journal article" date="1998" name="J. Mol. Evol.">
        <title>The mitochondrial DNA molecule of the hagfish (Myxine glutinosa) and vertebrate phylogeny.</title>
        <authorList>
            <person name="Rasmussen A.S."/>
            <person name="Janke A."/>
            <person name="Arnason U."/>
        </authorList>
    </citation>
    <scope>NUCLEOTIDE SEQUENCE [GENOMIC DNA]</scope>
</reference>
<reference key="2">
    <citation type="journal article" date="2001" name="J. Mol. Evol.">
        <title>The complete mitochondrial genome of the hagfish Myxine glutinosa: unique features of the control region.</title>
        <authorList>
            <person name="Delarbre C."/>
            <person name="Rasmussen A.S."/>
            <person name="Arnason U."/>
            <person name="Gachelin G."/>
        </authorList>
    </citation>
    <scope>NUCLEOTIDE SEQUENCE [GENOMIC DNA]</scope>
</reference>